<evidence type="ECO:0000250" key="1"/>
<evidence type="ECO:0000255" key="2">
    <source>
        <dbReference type="PROSITE-ProRule" id="PRU00407"/>
    </source>
</evidence>
<evidence type="ECO:0000255" key="3">
    <source>
        <dbReference type="PROSITE-ProRule" id="PRU01189"/>
    </source>
</evidence>
<evidence type="ECO:0000256" key="4">
    <source>
        <dbReference type="SAM" id="MobiDB-lite"/>
    </source>
</evidence>
<evidence type="ECO:0000269" key="5">
    <source>
    </source>
</evidence>
<evidence type="ECO:0000305" key="6"/>
<comment type="function">
    <text>The steroid hormones and their receptors are involved in the regulation of eukaryotic gene expression and affect cellular proliferation and differentiation in target tissues.</text>
</comment>
<comment type="subunit">
    <text evidence="1">Binds DNA as a homodimer. Can form a heterodimer with ER-beta (By similarity).</text>
</comment>
<comment type="subcellular location">
    <subcellularLocation>
        <location>Nucleus</location>
    </subcellularLocation>
</comment>
<comment type="tissue specificity">
    <text evidence="5">Widely expressed in brain, ovary, testis, and female liver.</text>
</comment>
<comment type="domain">
    <text>Composed of three domains: a modulating N-terminal domain, a DNA-binding domain and a C-terminal ligand-binding domain.</text>
</comment>
<comment type="similarity">
    <text evidence="6">Belongs to the nuclear hormone receptor family. NR3 subfamily.</text>
</comment>
<gene>
    <name type="primary">esr1</name>
    <name type="synonym">esr</name>
    <name type="synonym">mer</name>
    <name type="synonym">nr3a1</name>
</gene>
<accession>P50241</accession>
<organism>
    <name type="scientific">Oryzias latipes</name>
    <name type="common">Japanese rice fish</name>
    <name type="synonym">Japanese killifish</name>
    <dbReference type="NCBI Taxonomy" id="8090"/>
    <lineage>
        <taxon>Eukaryota</taxon>
        <taxon>Metazoa</taxon>
        <taxon>Chordata</taxon>
        <taxon>Craniata</taxon>
        <taxon>Vertebrata</taxon>
        <taxon>Euteleostomi</taxon>
        <taxon>Actinopterygii</taxon>
        <taxon>Neopterygii</taxon>
        <taxon>Teleostei</taxon>
        <taxon>Neoteleostei</taxon>
        <taxon>Acanthomorphata</taxon>
        <taxon>Ovalentaria</taxon>
        <taxon>Atherinomorphae</taxon>
        <taxon>Beloniformes</taxon>
        <taxon>Adrianichthyidae</taxon>
        <taxon>Oryziinae</taxon>
        <taxon>Oryzias</taxon>
    </lineage>
</organism>
<protein>
    <recommendedName>
        <fullName>Estrogen receptor</fullName>
        <shortName>ER</shortName>
    </recommendedName>
    <alternativeName>
        <fullName>ER-alpha</fullName>
    </alternativeName>
    <alternativeName>
        <fullName>Estradiol receptor</fullName>
    </alternativeName>
    <alternativeName>
        <fullName>Nuclear receptor subfamily 3 group A member 1</fullName>
    </alternativeName>
</protein>
<dbReference type="EMBL" id="D28954">
    <property type="protein sequence ID" value="BAA25900.1"/>
    <property type="molecule type" value="mRNA"/>
</dbReference>
<dbReference type="EMBL" id="AB033491">
    <property type="protein sequence ID" value="BAA86925.1"/>
    <property type="molecule type" value="Genomic_DNA"/>
</dbReference>
<dbReference type="PIR" id="T10423">
    <property type="entry name" value="T10423"/>
</dbReference>
<dbReference type="RefSeq" id="XP_020570152.1">
    <property type="nucleotide sequence ID" value="XM_020714493.1"/>
</dbReference>
<dbReference type="SMR" id="P50241"/>
<dbReference type="FunCoup" id="P50241">
    <property type="interactions" value="788"/>
</dbReference>
<dbReference type="STRING" id="8090.ENSORLP00000042539"/>
<dbReference type="Ensembl" id="ENSORLT00000018193.2">
    <property type="protein sequence ID" value="ENSORLP00000018192.2"/>
    <property type="gene ID" value="ENSORLG00000014514.2"/>
</dbReference>
<dbReference type="GeneID" id="101162413"/>
<dbReference type="eggNOG" id="KOG3575">
    <property type="taxonomic scope" value="Eukaryota"/>
</dbReference>
<dbReference type="GeneTree" id="ENSGT00940000158133"/>
<dbReference type="InParanoid" id="P50241"/>
<dbReference type="OrthoDB" id="5799427at2759"/>
<dbReference type="Proteomes" id="UP000001038">
    <property type="component" value="Chromosome 24"/>
</dbReference>
<dbReference type="Proteomes" id="UP000265180">
    <property type="component" value="Unplaced"/>
</dbReference>
<dbReference type="Proteomes" id="UP000265200">
    <property type="component" value="Unplaced"/>
</dbReference>
<dbReference type="Bgee" id="ENSORLG00000014514">
    <property type="expression patterns" value="Expressed in testis and 4 other cell types or tissues"/>
</dbReference>
<dbReference type="GO" id="GO:0000785">
    <property type="term" value="C:chromatin"/>
    <property type="evidence" value="ECO:0000318"/>
    <property type="project" value="GO_Central"/>
</dbReference>
<dbReference type="GO" id="GO:0005634">
    <property type="term" value="C:nucleus"/>
    <property type="evidence" value="ECO:0000250"/>
    <property type="project" value="UniProtKB"/>
</dbReference>
<dbReference type="GO" id="GO:0034056">
    <property type="term" value="F:estrogen response element binding"/>
    <property type="evidence" value="ECO:0000318"/>
    <property type="project" value="GO_Central"/>
</dbReference>
<dbReference type="GO" id="GO:0042562">
    <property type="term" value="F:hormone binding"/>
    <property type="evidence" value="ECO:0007669"/>
    <property type="project" value="UniProtKB-ARBA"/>
</dbReference>
<dbReference type="GO" id="GO:0030284">
    <property type="term" value="F:nuclear estrogen receptor activity"/>
    <property type="evidence" value="ECO:0007669"/>
    <property type="project" value="InterPro"/>
</dbReference>
<dbReference type="GO" id="GO:0004879">
    <property type="term" value="F:nuclear receptor activity"/>
    <property type="evidence" value="ECO:0000318"/>
    <property type="project" value="GO_Central"/>
</dbReference>
<dbReference type="GO" id="GO:0005496">
    <property type="term" value="F:steroid binding"/>
    <property type="evidence" value="ECO:0007669"/>
    <property type="project" value="UniProtKB-KW"/>
</dbReference>
<dbReference type="GO" id="GO:0008270">
    <property type="term" value="F:zinc ion binding"/>
    <property type="evidence" value="ECO:0007669"/>
    <property type="project" value="UniProtKB-KW"/>
</dbReference>
<dbReference type="GO" id="GO:0071391">
    <property type="term" value="P:cellular response to estrogen stimulus"/>
    <property type="evidence" value="ECO:0000318"/>
    <property type="project" value="GO_Central"/>
</dbReference>
<dbReference type="GO" id="GO:0030520">
    <property type="term" value="P:estrogen receptor signaling pathway"/>
    <property type="evidence" value="ECO:0000318"/>
    <property type="project" value="GO_Central"/>
</dbReference>
<dbReference type="GO" id="GO:0006357">
    <property type="term" value="P:regulation of transcription by RNA polymerase II"/>
    <property type="evidence" value="ECO:0000318"/>
    <property type="project" value="GO_Central"/>
</dbReference>
<dbReference type="CDD" id="cd07171">
    <property type="entry name" value="NR_DBD_ER"/>
    <property type="match status" value="1"/>
</dbReference>
<dbReference type="CDD" id="cd06949">
    <property type="entry name" value="NR_LBD_ER"/>
    <property type="match status" value="1"/>
</dbReference>
<dbReference type="FunFam" id="1.10.565.10:FF:000010">
    <property type="entry name" value="Estrogen receptor"/>
    <property type="match status" value="1"/>
</dbReference>
<dbReference type="FunFam" id="3.30.50.10:FF:000014">
    <property type="entry name" value="Estrogen receptor beta"/>
    <property type="match status" value="1"/>
</dbReference>
<dbReference type="Gene3D" id="3.30.50.10">
    <property type="entry name" value="Erythroid Transcription Factor GATA-1, subunit A"/>
    <property type="match status" value="1"/>
</dbReference>
<dbReference type="Gene3D" id="1.10.565.10">
    <property type="entry name" value="Retinoid X Receptor"/>
    <property type="match status" value="1"/>
</dbReference>
<dbReference type="InterPro" id="IPR024178">
    <property type="entry name" value="Est_rcpt/est-rel_rcp"/>
</dbReference>
<dbReference type="InterPro" id="IPR001292">
    <property type="entry name" value="Estr_rcpt"/>
</dbReference>
<dbReference type="InterPro" id="IPR046944">
    <property type="entry name" value="Estr_rcpt_N"/>
</dbReference>
<dbReference type="InterPro" id="IPR035500">
    <property type="entry name" value="NHR-like_dom_sf"/>
</dbReference>
<dbReference type="InterPro" id="IPR000536">
    <property type="entry name" value="Nucl_hrmn_rcpt_lig-bd"/>
</dbReference>
<dbReference type="InterPro" id="IPR050200">
    <property type="entry name" value="Nuclear_hormone_rcpt_NR3"/>
</dbReference>
<dbReference type="InterPro" id="IPR001723">
    <property type="entry name" value="Nuclear_hrmn_rcpt"/>
</dbReference>
<dbReference type="InterPro" id="IPR001628">
    <property type="entry name" value="Znf_hrmn_rcpt"/>
</dbReference>
<dbReference type="InterPro" id="IPR013088">
    <property type="entry name" value="Znf_NHR/GATA"/>
</dbReference>
<dbReference type="PANTHER" id="PTHR48092">
    <property type="entry name" value="KNIRPS-RELATED PROTEIN-RELATED"/>
    <property type="match status" value="1"/>
</dbReference>
<dbReference type="Pfam" id="PF00104">
    <property type="entry name" value="Hormone_recep"/>
    <property type="match status" value="1"/>
</dbReference>
<dbReference type="Pfam" id="PF02159">
    <property type="entry name" value="Oest_recep"/>
    <property type="match status" value="1"/>
</dbReference>
<dbReference type="Pfam" id="PF00105">
    <property type="entry name" value="zf-C4"/>
    <property type="match status" value="1"/>
</dbReference>
<dbReference type="PIRSF" id="PIRSF500101">
    <property type="entry name" value="ER-a"/>
    <property type="match status" value="1"/>
</dbReference>
<dbReference type="PIRSF" id="PIRSF002527">
    <property type="entry name" value="ER-like_NR"/>
    <property type="match status" value="1"/>
</dbReference>
<dbReference type="PRINTS" id="PR00398">
    <property type="entry name" value="STRDHORMONER"/>
</dbReference>
<dbReference type="PRINTS" id="PR00047">
    <property type="entry name" value="STROIDFINGER"/>
</dbReference>
<dbReference type="SMART" id="SM00430">
    <property type="entry name" value="HOLI"/>
    <property type="match status" value="1"/>
</dbReference>
<dbReference type="SMART" id="SM00399">
    <property type="entry name" value="ZnF_C4"/>
    <property type="match status" value="1"/>
</dbReference>
<dbReference type="SUPFAM" id="SSF57716">
    <property type="entry name" value="Glucocorticoid receptor-like (DNA-binding domain)"/>
    <property type="match status" value="1"/>
</dbReference>
<dbReference type="SUPFAM" id="SSF48508">
    <property type="entry name" value="Nuclear receptor ligand-binding domain"/>
    <property type="match status" value="1"/>
</dbReference>
<dbReference type="PROSITE" id="PS51843">
    <property type="entry name" value="NR_LBD"/>
    <property type="match status" value="1"/>
</dbReference>
<dbReference type="PROSITE" id="PS00031">
    <property type="entry name" value="NUCLEAR_REC_DBD_1"/>
    <property type="match status" value="1"/>
</dbReference>
<dbReference type="PROSITE" id="PS51030">
    <property type="entry name" value="NUCLEAR_REC_DBD_2"/>
    <property type="match status" value="1"/>
</dbReference>
<feature type="chain" id="PRO_0000053634" description="Estrogen receptor">
    <location>
        <begin position="1"/>
        <end position="620"/>
    </location>
</feature>
<feature type="domain" description="NR LBD" evidence="3">
    <location>
        <begin position="315"/>
        <end position="551"/>
    </location>
</feature>
<feature type="DNA-binding region" description="Nuclear receptor" evidence="2">
    <location>
        <begin position="186"/>
        <end position="251"/>
    </location>
</feature>
<feature type="zinc finger region" description="NR C4-type" evidence="2">
    <location>
        <begin position="186"/>
        <end position="206"/>
    </location>
</feature>
<feature type="zinc finger region" description="NR C4-type" evidence="2">
    <location>
        <begin position="222"/>
        <end position="246"/>
    </location>
</feature>
<feature type="region of interest" description="Modulating">
    <location>
        <begin position="1"/>
        <end position="185"/>
    </location>
</feature>
<feature type="region of interest" description="Disordered" evidence="4">
    <location>
        <begin position="1"/>
        <end position="55"/>
    </location>
</feature>
<feature type="region of interest" description="Disordered" evidence="4">
    <location>
        <begin position="88"/>
        <end position="111"/>
    </location>
</feature>
<feature type="region of interest" description="Hinge">
    <location>
        <begin position="252"/>
        <end position="314"/>
    </location>
</feature>
<feature type="region of interest" description="Disordered" evidence="4">
    <location>
        <begin position="286"/>
        <end position="308"/>
    </location>
</feature>
<feature type="region of interest" description="Disordered" evidence="4">
    <location>
        <begin position="558"/>
        <end position="620"/>
    </location>
</feature>
<feature type="compositionally biased region" description="Polar residues" evidence="4">
    <location>
        <begin position="1"/>
        <end position="10"/>
    </location>
</feature>
<feature type="compositionally biased region" description="Polar residues" evidence="4">
    <location>
        <begin position="101"/>
        <end position="111"/>
    </location>
</feature>
<feature type="compositionally biased region" description="Gly residues" evidence="4">
    <location>
        <begin position="298"/>
        <end position="308"/>
    </location>
</feature>
<proteinExistence type="evidence at transcript level"/>
<name>ESR1_ORYLA</name>
<reference key="1">
    <citation type="journal article" date="2000" name="Zool. Sci.">
        <title>Cloning and expression of genomic and complementary DNAs encoding an estrogen receptor in the medaka fish, Oryzias latipes.</title>
        <authorList>
            <person name="Kawahara T."/>
            <person name="Okada H."/>
            <person name="Yamashita I."/>
        </authorList>
    </citation>
    <scope>NUCLEOTIDE SEQUENCE [GENOMIC DNA / MRNA]</scope>
    <scope>TISSUE SPECIFICITY</scope>
    <source>
        <strain>D-RR</strain>
        <tissue>Liver</tissue>
    </source>
</reference>
<keyword id="KW-0238">DNA-binding</keyword>
<keyword id="KW-0446">Lipid-binding</keyword>
<keyword id="KW-0479">Metal-binding</keyword>
<keyword id="KW-0539">Nucleus</keyword>
<keyword id="KW-0675">Receptor</keyword>
<keyword id="KW-1185">Reference proteome</keyword>
<keyword id="KW-0754">Steroid-binding</keyword>
<keyword id="KW-0804">Transcription</keyword>
<keyword id="KW-0805">Transcription regulation</keyword>
<keyword id="KW-0862">Zinc</keyword>
<keyword id="KW-0863">Zinc-finger</keyword>
<sequence length="620" mass="67729">MSKRQSSVQIRQLFGPALRSRISPASSELETLSPPRLSPRDPLGDMYPEESRGSGGVAAVDFLEGTYDYAAPNPATTPLYSQSSTGYYSAPLETNGPPSEGSLQSLGSGPTSPLVFVPSSPRLSPFMHPPSHHYLETTSTPVYRSSHQGASREDQCGSREDTCSLGELGAGAGAGGFEMAKDTRFCAVCSDYASGYHYGVWSCEGCKAFFKRSIQGHNDYMCPATNQCTIDRNRRKSCQACRLRKCYEVGMMKGGVRKDRIRILRRDKRRTGVGDGDKVVKGQEHKTVHYDGRKRSSTGGGGGGGGGRLSVTSIPPEQVLLLLQGAEPPILCSRQKLSRPYTEVTMMTLLTSMADKELVHMIAWAKKLPGFLQLSLHDQVLLLESSWLEVLMIGLIWRSIHCPGKLIFAQDLILDRNEGDCVEGMTEIFDMLLATASRFRVLKLKPEEFVCLKAIILLNSGAFSFCTGTMEPLHNSAAVQSMLDTITDALIHYISQSGYLAQEQARRQAQLLLLLSHIRHMSNKGMEHLYSMKCKNKVPLYDLLLEMLDAHRLHHPVRAPQSLSQVDRDPPSTSSGGGGIAPGSISASRGRIESPSRGPFAPSVLQYGGSRPDCTPALQD</sequence>